<feature type="chain" id="PRO_0000422327" description="4-nitrophenol 4-monooxygenase/4-nitrocatechol 2-monooxygenase, oxygenase component">
    <location>
        <begin position="1"/>
        <end position="528"/>
    </location>
</feature>
<feature type="binding site" evidence="1">
    <location>
        <begin position="100"/>
        <end position="104"/>
    </location>
    <ligand>
        <name>substrate</name>
    </ligand>
</feature>
<feature type="binding site" evidence="1">
    <location>
        <begin position="153"/>
        <end position="155"/>
    </location>
    <ligand>
        <name>FAD</name>
        <dbReference type="ChEBI" id="CHEBI:57692"/>
    </ligand>
</feature>
<feature type="binding site" evidence="1">
    <location>
        <begin position="159"/>
        <end position="162"/>
    </location>
    <ligand>
        <name>FAD</name>
        <dbReference type="ChEBI" id="CHEBI:57692"/>
    </ligand>
</feature>
<feature type="binding site" evidence="1">
    <location>
        <position position="194"/>
    </location>
    <ligand>
        <name>FAD</name>
        <dbReference type="ChEBI" id="CHEBI:57692"/>
    </ligand>
</feature>
<feature type="binding site" evidence="1">
    <location>
        <begin position="205"/>
        <end position="206"/>
    </location>
    <ligand>
        <name>substrate</name>
    </ligand>
</feature>
<feature type="binding site" evidence="1">
    <location>
        <begin position="461"/>
        <end position="464"/>
    </location>
    <ligand>
        <name>FAD</name>
        <dbReference type="ChEBI" id="CHEBI:57692"/>
    </ligand>
</feature>
<protein>
    <recommendedName>
        <fullName>4-nitrophenol 4-monooxygenase/4-nitrocatechol 2-monooxygenase, oxygenase component</fullName>
        <shortName>4-NP/4-NCA monooxygenase</shortName>
        <ecNumber>1.14.13.166</ecNumber>
        <ecNumber>1.14.13.29</ecNumber>
    </recommendedName>
    <alternativeName>
        <fullName>PNP monooxygenase</fullName>
    </alternativeName>
</protein>
<organism>
    <name type="scientific">Rhodococcus opacus</name>
    <name type="common">Nocardia opaca</name>
    <dbReference type="NCBI Taxonomy" id="37919"/>
    <lineage>
        <taxon>Bacteria</taxon>
        <taxon>Bacillati</taxon>
        <taxon>Actinomycetota</taxon>
        <taxon>Actinomycetes</taxon>
        <taxon>Mycobacteriales</taxon>
        <taxon>Nocardiaceae</taxon>
        <taxon>Rhodococcus</taxon>
    </lineage>
</organism>
<evidence type="ECO:0000250" key="1"/>
<evidence type="ECO:0000269" key="2">
    <source>
    </source>
</evidence>
<evidence type="ECO:0000269" key="3">
    <source>
    </source>
</evidence>
<evidence type="ECO:0000305" key="4"/>
<evidence type="ECO:0000305" key="5">
    <source>
    </source>
</evidence>
<evidence type="ECO:0000305" key="6">
    <source>
    </source>
</evidence>
<keyword id="KW-0058">Aromatic hydrocarbons catabolism</keyword>
<keyword id="KW-0274">FAD</keyword>
<keyword id="KW-0285">Flavoprotein</keyword>
<keyword id="KW-0503">Monooxygenase</keyword>
<keyword id="KW-0520">NAD</keyword>
<keyword id="KW-0560">Oxidoreductase</keyword>
<proteinExistence type="evidence at protein level"/>
<comment type="function">
    <text evidence="2 3">Involved in the degradation of para-nitrophenol (4-NP). Catalyzes both the initial hydroxylation of 4-NP to produce 4-nitrocatechol (4-NCA) and the subsequent oxidative release of the nitro group from 4-NCA to produce 2-hydroxy-1,4-benzoquinone. It can also use 4-nitroresorcinol as substrate with a rate of nitrite release similar to that observed with the two physiological substrates, 4-PN and 4-NCA.</text>
</comment>
<comment type="catalytic activity">
    <reaction evidence="3">
        <text>4-nitrophenol + NADH + O2 + H(+) = 4-nitrocatechol + NAD(+) + H2O</text>
        <dbReference type="Rhea" id="RHEA:12568"/>
        <dbReference type="ChEBI" id="CHEBI:15377"/>
        <dbReference type="ChEBI" id="CHEBI:15378"/>
        <dbReference type="ChEBI" id="CHEBI:15379"/>
        <dbReference type="ChEBI" id="CHEBI:57540"/>
        <dbReference type="ChEBI" id="CHEBI:57730"/>
        <dbReference type="ChEBI" id="CHEBI:57917"/>
        <dbReference type="ChEBI" id="CHEBI:57945"/>
        <dbReference type="EC" id="1.14.13.29"/>
    </reaction>
</comment>
<comment type="catalytic activity">
    <reaction evidence="3">
        <text>4-nitrocatechol + NADPH + O2 = 2-hydroxy-1,4-benzoquinone + nitrite + NADP(+) + H2O</text>
        <dbReference type="Rhea" id="RHEA:34307"/>
        <dbReference type="ChEBI" id="CHEBI:15377"/>
        <dbReference type="ChEBI" id="CHEBI:15379"/>
        <dbReference type="ChEBI" id="CHEBI:16301"/>
        <dbReference type="ChEBI" id="CHEBI:57730"/>
        <dbReference type="ChEBI" id="CHEBI:57783"/>
        <dbReference type="ChEBI" id="CHEBI:58349"/>
        <dbReference type="ChEBI" id="CHEBI:58474"/>
        <dbReference type="EC" id="1.14.13.166"/>
    </reaction>
</comment>
<comment type="catalytic activity">
    <reaction evidence="3">
        <text>4-nitrocatechol + NADH + O2 = 2-hydroxy-1,4-benzoquinone + nitrite + NAD(+) + H2O</text>
        <dbReference type="Rhea" id="RHEA:34311"/>
        <dbReference type="ChEBI" id="CHEBI:15377"/>
        <dbReference type="ChEBI" id="CHEBI:15379"/>
        <dbReference type="ChEBI" id="CHEBI:16301"/>
        <dbReference type="ChEBI" id="CHEBI:57540"/>
        <dbReference type="ChEBI" id="CHEBI:57730"/>
        <dbReference type="ChEBI" id="CHEBI:57945"/>
        <dbReference type="ChEBI" id="CHEBI:58474"/>
        <dbReference type="EC" id="1.14.13.166"/>
    </reaction>
</comment>
<comment type="cofactor">
    <cofactor evidence="6">
        <name>FAD</name>
        <dbReference type="ChEBI" id="CHEBI:57692"/>
    </cofactor>
</comment>
<comment type="activity regulation">
    <text evidence="3">Inhibited by methimazole.</text>
</comment>
<comment type="biophysicochemical properties">
    <phDependence>
        <text evidence="3">Optimum pH is 8.</text>
    </phDependence>
</comment>
<comment type="pathway">
    <text>Aromatic compound metabolism.</text>
</comment>
<comment type="pathway">
    <text>Xenobiotic degradation.</text>
</comment>
<comment type="subunit">
    <text evidence="5">The 4-NP/4-NCA monooxygenase is composed of an oxygenase component NpcA and a reductase component NpcB.</text>
</comment>
<comment type="induction">
    <text evidence="2">By 4-NP.</text>
</comment>
<comment type="disruption phenotype">
    <text evidence="2">Cells lacking this gene completely lose the ability to grow on 4-NP, 4-NCA, and hydroxyquinol.</text>
</comment>
<comment type="similarity">
    <text evidence="4">Belongs to the FADH(2)-utilizing monooxygenase family.</text>
</comment>
<dbReference type="EC" id="1.14.13.166"/>
<dbReference type="EC" id="1.14.13.29"/>
<dbReference type="EMBL" id="AB154422">
    <property type="protein sequence ID" value="BAD30042.1"/>
    <property type="molecule type" value="Genomic_DNA"/>
</dbReference>
<dbReference type="RefSeq" id="WP_007295637.1">
    <property type="nucleotide sequence ID" value="NZ_CP051855.1"/>
</dbReference>
<dbReference type="SMR" id="Q6F4M8"/>
<dbReference type="KEGG" id="ag:BAD30042"/>
<dbReference type="BioCyc" id="MetaCyc:MONOMER-17435"/>
<dbReference type="BRENDA" id="1.14.13.166">
    <property type="organism ID" value="698"/>
</dbReference>
<dbReference type="GO" id="GO:0018592">
    <property type="term" value="F:4-nitrocatechol 4-monooxygenase activity"/>
    <property type="evidence" value="ECO:0007669"/>
    <property type="project" value="UniProtKB-EC"/>
</dbReference>
<dbReference type="GO" id="GO:0018601">
    <property type="term" value="F:4-nitrophenol 2-monooxygenase activity"/>
    <property type="evidence" value="ECO:0007669"/>
    <property type="project" value="UniProtKB-EC"/>
</dbReference>
<dbReference type="GO" id="GO:0016627">
    <property type="term" value="F:oxidoreductase activity, acting on the CH-CH group of donors"/>
    <property type="evidence" value="ECO:0007669"/>
    <property type="project" value="InterPro"/>
</dbReference>
<dbReference type="GO" id="GO:0009056">
    <property type="term" value="P:catabolic process"/>
    <property type="evidence" value="ECO:0007669"/>
    <property type="project" value="UniProtKB-KW"/>
</dbReference>
<dbReference type="Gene3D" id="1.10.3140.10">
    <property type="entry name" value="4-hydroxybutyryl-coa dehydratase, domain 1"/>
    <property type="match status" value="1"/>
</dbReference>
<dbReference type="Gene3D" id="2.40.110.10">
    <property type="entry name" value="Butyryl-CoA Dehydrogenase, subunit A, domain 2"/>
    <property type="match status" value="1"/>
</dbReference>
<dbReference type="Gene3D" id="1.20.140.10">
    <property type="entry name" value="Butyryl-CoA Dehydrogenase, subunit A, domain 3"/>
    <property type="match status" value="1"/>
</dbReference>
<dbReference type="InterPro" id="IPR046373">
    <property type="entry name" value="Acyl-CoA_Oxase/DH_mid-dom_sf"/>
</dbReference>
<dbReference type="InterPro" id="IPR036250">
    <property type="entry name" value="AcylCo_DH-like_C"/>
</dbReference>
<dbReference type="InterPro" id="IPR009100">
    <property type="entry name" value="AcylCoA_DH/oxidase_NM_dom_sf"/>
</dbReference>
<dbReference type="InterPro" id="IPR004925">
    <property type="entry name" value="HpaB/PvcC/4-BUDH"/>
</dbReference>
<dbReference type="InterPro" id="IPR024719">
    <property type="entry name" value="HpaB/PvcC/4-BUDH_C"/>
</dbReference>
<dbReference type="InterPro" id="IPR024674">
    <property type="entry name" value="HpaB/PvcC/4-BUDH_N"/>
</dbReference>
<dbReference type="PANTHER" id="PTHR36117">
    <property type="entry name" value="4-HYDROXYPHENYLACETATE 3-MONOOXYGENASE-RELATED"/>
    <property type="match status" value="1"/>
</dbReference>
<dbReference type="PANTHER" id="PTHR36117:SF3">
    <property type="entry name" value="4-HYDROXYPHENYLACETATE 3-MONOOXYGENASE-RELATED"/>
    <property type="match status" value="1"/>
</dbReference>
<dbReference type="Pfam" id="PF03241">
    <property type="entry name" value="HpaB"/>
    <property type="match status" value="1"/>
</dbReference>
<dbReference type="Pfam" id="PF11794">
    <property type="entry name" value="HpaB_N"/>
    <property type="match status" value="1"/>
</dbReference>
<dbReference type="SUPFAM" id="SSF47203">
    <property type="entry name" value="Acyl-CoA dehydrogenase C-terminal domain-like"/>
    <property type="match status" value="1"/>
</dbReference>
<dbReference type="SUPFAM" id="SSF56645">
    <property type="entry name" value="Acyl-CoA dehydrogenase NM domain-like"/>
    <property type="match status" value="1"/>
</dbReference>
<reference key="1">
    <citation type="journal article" date="2004" name="J. Bacteriol.">
        <title>A novel p-nitrophenol degradation gene cluster from a gram-positive bacterium, Rhodococcus opacus SAO101.</title>
        <authorList>
            <person name="Kitagawa W."/>
            <person name="Kimura N."/>
            <person name="Kamagata Y."/>
        </authorList>
    </citation>
    <scope>NUCLEOTIDE SEQUENCE [GENOMIC DNA]</scope>
    <scope>FUNCTION</scope>
    <scope>DISRUPTION PHENOTYPE</scope>
    <scope>INDUCTION</scope>
    <scope>SUBUNIT</scope>
    <scope>NOMENCLATURE</scope>
    <source>
        <strain>SAO101</strain>
    </source>
</reference>
<reference key="2">
    <citation type="journal article" date="1998" name="Appl. Environ. Microbiol.">
        <title>A two-component monooxygenase catalyzes both the hydroxylation of p-nitrophenol and the oxidative release of nitrite from 4-nitrocatechol in Bacillus sphaericus JS905.</title>
        <authorList>
            <person name="Kadiyala V."/>
            <person name="Spain J.C."/>
        </authorList>
    </citation>
    <scope>FUNCTION</scope>
    <scope>CATALYTIC ACTIVITY</scope>
    <scope>COFACTOR</scope>
    <scope>ACTIVITY REGULATION</scope>
    <scope>BIOPHYSICOCHEMICAL PROPERTIES</scope>
    <scope>SUBSTRATE SPECIFICITY</scope>
    <scope>NOMENCLATURE</scope>
    <source>
        <strain>JS905</strain>
    </source>
</reference>
<accession>Q6F4M8</accession>
<name>NPCA_RHOOP</name>
<sequence length="528" mass="59739">MRTGQQYLESLRDGRQVYVGGELIDDVTTHPKTSGYAKAIAEYYDLHLDPEHQDVLTFVDDDGVRKSMHWFLPRSKADAARRRAYHEFWFRHFQGGIFTRPPAGMHVVMYAQIDDPEPWGDNAVVAGGRTISFADNIRSQWQRVTTDDVALSPMFVDVQFDRGRDDALVETPMLSIVEQNDQGIVVRGWKAMGTSLPFVNELLVGNLWRPGQTSDQTVYAIVPVNTPGLSLVCRQSNATPDADPYDHPLSTIGDELDGMAYFDDVFIPWENVQHIGNPDHAKWYPQRQFDWVHIETQIRHAVHAELIVGLALLLTNALGTNNNPIVQSQLADLVRFRETCKAFAIAAEETGFTTAGGLFKPNNIYVDLGRAHYLENIHNAVNQLIEFCGRGVVMSPTKADFDHPFLGPKLEEALRGTSISARDRVSIFRQISERYLTQWGARHEMFEKFNGTPLYLVRLLTMQRTEYQVDGPLTDLARQVLGFGDTEALAARAAEVEKNSNWASVAYQPEYAREQDVRDGYYKETEKV</sequence>
<gene>
    <name type="primary">npcA</name>
</gene>